<protein>
    <recommendedName>
        <fullName>Conotoxin VnMLKM-02</fullName>
    </recommendedName>
</protein>
<keyword id="KW-0165">Cleavage on pair of basic residues</keyword>
<keyword id="KW-1015">Disulfide bond</keyword>
<keyword id="KW-0528">Neurotoxin</keyword>
<keyword id="KW-0964">Secreted</keyword>
<keyword id="KW-0732">Signal</keyword>
<keyword id="KW-0800">Toxin</keyword>
<feature type="signal peptide" evidence="2">
    <location>
        <begin position="1"/>
        <end position="24"/>
    </location>
</feature>
<feature type="propeptide" id="PRO_0000404924" evidence="1">
    <location>
        <begin position="25"/>
        <end position="53"/>
    </location>
</feature>
<feature type="peptide" id="PRO_0000404925" description="Conotoxin VnMLKM-02">
    <location>
        <begin position="56"/>
        <end position="71"/>
    </location>
</feature>
<feature type="disulfide bond" evidence="1">
    <location>
        <begin position="56"/>
        <end position="66"/>
    </location>
</feature>
<feature type="disulfide bond" evidence="1">
    <location>
        <begin position="57"/>
        <end position="70"/>
    </location>
</feature>
<feature type="disulfide bond" evidence="1">
    <location>
        <begin position="62"/>
        <end position="71"/>
    </location>
</feature>
<sequence length="71" mass="8107">MLKMGVVLFIFLVLFTLATLQLDADQPVERYAENKQLLSPDERRDIILHALGQRRCCDPDWCDAGCYDGCC</sequence>
<proteinExistence type="evidence at transcript level"/>
<reference key="1">
    <citation type="journal article" date="2001" name="Mol. Biol. Evol.">
        <title>Mechanisms for evolving hypervariability: the case of conopeptides.</title>
        <authorList>
            <person name="Conticello S.G."/>
            <person name="Gilad Y."/>
            <person name="Avidan N."/>
            <person name="Ben-Asher E."/>
            <person name="Levy Z."/>
            <person name="Fainzilber M."/>
        </authorList>
    </citation>
    <scope>NUCLEOTIDE SEQUENCE [MRNA]</scope>
    <source>
        <tissue>Venom duct</tissue>
    </source>
</reference>
<accession>Q9BPH6</accession>
<name>CM336_CONVE</name>
<evidence type="ECO:0000250" key="1"/>
<evidence type="ECO:0000255" key="2"/>
<evidence type="ECO:0000305" key="3"/>
<comment type="subcellular location">
    <subcellularLocation>
        <location evidence="1">Secreted</location>
    </subcellularLocation>
</comment>
<comment type="tissue specificity">
    <text>Expressed by the venom duct.</text>
</comment>
<comment type="domain">
    <text>The cysteine framework is III (CC-C-C-CC). Classified in the M-3 branch, since 3 residues stand between the fourth and the fifth cysteine residues.</text>
</comment>
<comment type="similarity">
    <text evidence="3">Belongs to the conotoxin M superfamily.</text>
</comment>
<dbReference type="EMBL" id="AF214949">
    <property type="protein sequence ID" value="AAG60377.1"/>
    <property type="molecule type" value="mRNA"/>
</dbReference>
<dbReference type="SMR" id="Q9BPH6"/>
<dbReference type="ConoServer" id="636">
    <property type="toxin name" value="Vn3.6 precursor"/>
</dbReference>
<dbReference type="GO" id="GO:0005576">
    <property type="term" value="C:extracellular region"/>
    <property type="evidence" value="ECO:0007669"/>
    <property type="project" value="UniProtKB-SubCell"/>
</dbReference>
<dbReference type="GO" id="GO:0008200">
    <property type="term" value="F:ion channel inhibitor activity"/>
    <property type="evidence" value="ECO:0007669"/>
    <property type="project" value="InterPro"/>
</dbReference>
<dbReference type="GO" id="GO:0090729">
    <property type="term" value="F:toxin activity"/>
    <property type="evidence" value="ECO:0007669"/>
    <property type="project" value="UniProtKB-KW"/>
</dbReference>
<dbReference type="InterPro" id="IPR004214">
    <property type="entry name" value="Conotoxin"/>
</dbReference>
<dbReference type="Pfam" id="PF02950">
    <property type="entry name" value="Conotoxin"/>
    <property type="match status" value="1"/>
</dbReference>
<organism>
    <name type="scientific">Conus ventricosus</name>
    <name type="common">Mediterranean cone</name>
    <dbReference type="NCBI Taxonomy" id="117992"/>
    <lineage>
        <taxon>Eukaryota</taxon>
        <taxon>Metazoa</taxon>
        <taxon>Spiralia</taxon>
        <taxon>Lophotrochozoa</taxon>
        <taxon>Mollusca</taxon>
        <taxon>Gastropoda</taxon>
        <taxon>Caenogastropoda</taxon>
        <taxon>Neogastropoda</taxon>
        <taxon>Conoidea</taxon>
        <taxon>Conidae</taxon>
        <taxon>Conus</taxon>
        <taxon>Lautoconus</taxon>
    </lineage>
</organism>